<feature type="chain" id="PRO_0000211760" description="Recombination-associated protein RdgC">
    <location>
        <begin position="1"/>
        <end position="303"/>
    </location>
</feature>
<evidence type="ECO:0000255" key="1">
    <source>
        <dbReference type="HAMAP-Rule" id="MF_00194"/>
    </source>
</evidence>
<dbReference type="EMBL" id="AL590842">
    <property type="protein sequence ID" value="CAL21806.1"/>
    <property type="molecule type" value="Genomic_DNA"/>
</dbReference>
<dbReference type="EMBL" id="AE009952">
    <property type="protein sequence ID" value="AAM84555.1"/>
    <property type="molecule type" value="Genomic_DNA"/>
</dbReference>
<dbReference type="EMBL" id="AE017042">
    <property type="protein sequence ID" value="AAS60989.1"/>
    <property type="molecule type" value="Genomic_DNA"/>
</dbReference>
<dbReference type="PIR" id="AC0390">
    <property type="entry name" value="AC0390"/>
</dbReference>
<dbReference type="RefSeq" id="WP_002208691.1">
    <property type="nucleotide sequence ID" value="NZ_WUCM01000034.1"/>
</dbReference>
<dbReference type="RefSeq" id="YP_002348114.1">
    <property type="nucleotide sequence ID" value="NC_003143.1"/>
</dbReference>
<dbReference type="SMR" id="Q8ZC18"/>
<dbReference type="IntAct" id="Q8ZC18">
    <property type="interactions" value="4"/>
</dbReference>
<dbReference type="STRING" id="214092.YPO3212"/>
<dbReference type="PaxDb" id="214092-YPO3212"/>
<dbReference type="DNASU" id="1145921"/>
<dbReference type="EnsemblBacteria" id="AAS60989">
    <property type="protein sequence ID" value="AAS60989"/>
    <property type="gene ID" value="YP_0723"/>
</dbReference>
<dbReference type="GeneID" id="57975504"/>
<dbReference type="KEGG" id="ype:YPO3212"/>
<dbReference type="KEGG" id="ypk:y0974"/>
<dbReference type="KEGG" id="ypm:YP_0723"/>
<dbReference type="PATRIC" id="fig|214092.21.peg.3672"/>
<dbReference type="eggNOG" id="COG2974">
    <property type="taxonomic scope" value="Bacteria"/>
</dbReference>
<dbReference type="HOGENOM" id="CLU_052038_1_1_6"/>
<dbReference type="OMA" id="TGWVPPM"/>
<dbReference type="OrthoDB" id="5290530at2"/>
<dbReference type="Proteomes" id="UP000000815">
    <property type="component" value="Chromosome"/>
</dbReference>
<dbReference type="Proteomes" id="UP000001019">
    <property type="component" value="Chromosome"/>
</dbReference>
<dbReference type="Proteomes" id="UP000002490">
    <property type="component" value="Chromosome"/>
</dbReference>
<dbReference type="GO" id="GO:0043590">
    <property type="term" value="C:bacterial nucleoid"/>
    <property type="evidence" value="ECO:0000318"/>
    <property type="project" value="GO_Central"/>
</dbReference>
<dbReference type="GO" id="GO:0005737">
    <property type="term" value="C:cytoplasm"/>
    <property type="evidence" value="ECO:0007669"/>
    <property type="project" value="UniProtKB-UniRule"/>
</dbReference>
<dbReference type="GO" id="GO:0003690">
    <property type="term" value="F:double-stranded DNA binding"/>
    <property type="evidence" value="ECO:0000318"/>
    <property type="project" value="GO_Central"/>
</dbReference>
<dbReference type="GO" id="GO:0006310">
    <property type="term" value="P:DNA recombination"/>
    <property type="evidence" value="ECO:0007669"/>
    <property type="project" value="UniProtKB-UniRule"/>
</dbReference>
<dbReference type="GO" id="GO:0000018">
    <property type="term" value="P:regulation of DNA recombination"/>
    <property type="evidence" value="ECO:0000318"/>
    <property type="project" value="GO_Central"/>
</dbReference>
<dbReference type="HAMAP" id="MF_00194">
    <property type="entry name" value="RdgC"/>
    <property type="match status" value="1"/>
</dbReference>
<dbReference type="InterPro" id="IPR007476">
    <property type="entry name" value="RdgC"/>
</dbReference>
<dbReference type="NCBIfam" id="NF001460">
    <property type="entry name" value="PRK00321.1-1"/>
    <property type="match status" value="1"/>
</dbReference>
<dbReference type="NCBIfam" id="NF001462">
    <property type="entry name" value="PRK00321.1-3"/>
    <property type="match status" value="1"/>
</dbReference>
<dbReference type="NCBIfam" id="NF001464">
    <property type="entry name" value="PRK00321.1-5"/>
    <property type="match status" value="1"/>
</dbReference>
<dbReference type="PANTHER" id="PTHR38103">
    <property type="entry name" value="RECOMBINATION-ASSOCIATED PROTEIN RDGC"/>
    <property type="match status" value="1"/>
</dbReference>
<dbReference type="PANTHER" id="PTHR38103:SF1">
    <property type="entry name" value="RECOMBINATION-ASSOCIATED PROTEIN RDGC"/>
    <property type="match status" value="1"/>
</dbReference>
<dbReference type="Pfam" id="PF04381">
    <property type="entry name" value="RdgC"/>
    <property type="match status" value="1"/>
</dbReference>
<reference key="1">
    <citation type="journal article" date="2001" name="Nature">
        <title>Genome sequence of Yersinia pestis, the causative agent of plague.</title>
        <authorList>
            <person name="Parkhill J."/>
            <person name="Wren B.W."/>
            <person name="Thomson N.R."/>
            <person name="Titball R.W."/>
            <person name="Holden M.T.G."/>
            <person name="Prentice M.B."/>
            <person name="Sebaihia M."/>
            <person name="James K.D."/>
            <person name="Churcher C.M."/>
            <person name="Mungall K.L."/>
            <person name="Baker S."/>
            <person name="Basham D."/>
            <person name="Bentley S.D."/>
            <person name="Brooks K."/>
            <person name="Cerdeno-Tarraga A.-M."/>
            <person name="Chillingworth T."/>
            <person name="Cronin A."/>
            <person name="Davies R.M."/>
            <person name="Davis P."/>
            <person name="Dougan G."/>
            <person name="Feltwell T."/>
            <person name="Hamlin N."/>
            <person name="Holroyd S."/>
            <person name="Jagels K."/>
            <person name="Karlyshev A.V."/>
            <person name="Leather S."/>
            <person name="Moule S."/>
            <person name="Oyston P.C.F."/>
            <person name="Quail M.A."/>
            <person name="Rutherford K.M."/>
            <person name="Simmonds M."/>
            <person name="Skelton J."/>
            <person name="Stevens K."/>
            <person name="Whitehead S."/>
            <person name="Barrell B.G."/>
        </authorList>
    </citation>
    <scope>NUCLEOTIDE SEQUENCE [LARGE SCALE GENOMIC DNA]</scope>
    <source>
        <strain>CO-92 / Biovar Orientalis</strain>
    </source>
</reference>
<reference key="2">
    <citation type="journal article" date="2002" name="J. Bacteriol.">
        <title>Genome sequence of Yersinia pestis KIM.</title>
        <authorList>
            <person name="Deng W."/>
            <person name="Burland V."/>
            <person name="Plunkett G. III"/>
            <person name="Boutin A."/>
            <person name="Mayhew G.F."/>
            <person name="Liss P."/>
            <person name="Perna N.T."/>
            <person name="Rose D.J."/>
            <person name="Mau B."/>
            <person name="Zhou S."/>
            <person name="Schwartz D.C."/>
            <person name="Fetherston J.D."/>
            <person name="Lindler L.E."/>
            <person name="Brubaker R.R."/>
            <person name="Plano G.V."/>
            <person name="Straley S.C."/>
            <person name="McDonough K.A."/>
            <person name="Nilles M.L."/>
            <person name="Matson J.S."/>
            <person name="Blattner F.R."/>
            <person name="Perry R.D."/>
        </authorList>
    </citation>
    <scope>NUCLEOTIDE SEQUENCE [LARGE SCALE GENOMIC DNA]</scope>
    <source>
        <strain>KIM10+ / Biovar Mediaevalis</strain>
    </source>
</reference>
<reference key="3">
    <citation type="journal article" date="2004" name="DNA Res.">
        <title>Complete genome sequence of Yersinia pestis strain 91001, an isolate avirulent to humans.</title>
        <authorList>
            <person name="Song Y."/>
            <person name="Tong Z."/>
            <person name="Wang J."/>
            <person name="Wang L."/>
            <person name="Guo Z."/>
            <person name="Han Y."/>
            <person name="Zhang J."/>
            <person name="Pei D."/>
            <person name="Zhou D."/>
            <person name="Qin H."/>
            <person name="Pang X."/>
            <person name="Han Y."/>
            <person name="Zhai J."/>
            <person name="Li M."/>
            <person name="Cui B."/>
            <person name="Qi Z."/>
            <person name="Jin L."/>
            <person name="Dai R."/>
            <person name="Chen F."/>
            <person name="Li S."/>
            <person name="Ye C."/>
            <person name="Du Z."/>
            <person name="Lin W."/>
            <person name="Wang J."/>
            <person name="Yu J."/>
            <person name="Yang H."/>
            <person name="Wang J."/>
            <person name="Huang P."/>
            <person name="Yang R."/>
        </authorList>
    </citation>
    <scope>NUCLEOTIDE SEQUENCE [LARGE SCALE GENOMIC DNA]</scope>
    <source>
        <strain>91001 / Biovar Mediaevalis</strain>
    </source>
</reference>
<comment type="function">
    <text evidence="1">May be involved in recombination.</text>
</comment>
<comment type="subcellular location">
    <subcellularLocation>
        <location evidence="1">Cytoplasm</location>
        <location evidence="1">Nucleoid</location>
    </subcellularLocation>
</comment>
<comment type="similarity">
    <text evidence="1">Belongs to the RdgC family.</text>
</comment>
<proteinExistence type="inferred from homology"/>
<organism>
    <name type="scientific">Yersinia pestis</name>
    <dbReference type="NCBI Taxonomy" id="632"/>
    <lineage>
        <taxon>Bacteria</taxon>
        <taxon>Pseudomonadati</taxon>
        <taxon>Pseudomonadota</taxon>
        <taxon>Gammaproteobacteria</taxon>
        <taxon>Enterobacterales</taxon>
        <taxon>Yersiniaceae</taxon>
        <taxon>Yersinia</taxon>
    </lineage>
</organism>
<protein>
    <recommendedName>
        <fullName evidence="1">Recombination-associated protein RdgC</fullName>
    </recommendedName>
</protein>
<sequence>MLWFKNLMVYRLSREVSLSADEMEKQLSAFSFTPCGSQDMAKTGWVSPMGSHSDALTHTVNGQIVICARKEEKILPSPVIKQELQDKIERLEGEQHRKLKKTEKDSLKDEVLHSLLPRAFSRFNQTFLWIDTVNDLIMVDAASAKRAEDTLALLRKSLGSLPVVPLTLENPIELTLTEWVRSKTLPAGFALMDEAELKAILEDGGVIRCKKQDLFSDEIAVHIEAGKLVTKLALDWQERIQLVLSDDGSLKRLKFADTLRDQNEDIDREDFAQRFDADFILMTSELAALIKNLIEALGGEAQH</sequence>
<gene>
    <name evidence="1" type="primary">rdgC</name>
    <name type="ordered locus">YPO3212</name>
    <name type="ordered locus">y0974</name>
    <name type="ordered locus">YP_0723</name>
</gene>
<accession>Q8ZC18</accession>
<accession>Q0WC74</accession>
<name>RDGC_YERPE</name>
<keyword id="KW-0963">Cytoplasm</keyword>
<keyword id="KW-0233">DNA recombination</keyword>
<keyword id="KW-1185">Reference proteome</keyword>